<protein>
    <recommendedName>
        <fullName evidence="1">Large ribosomal subunit protein uL2</fullName>
    </recommendedName>
    <alternativeName>
        <fullName evidence="3">50S ribosomal protein L2</fullName>
    </alternativeName>
</protein>
<feature type="chain" id="PRO_1000141618" description="Large ribosomal subunit protein uL2">
    <location>
        <begin position="1"/>
        <end position="278"/>
    </location>
</feature>
<feature type="region of interest" description="Disordered" evidence="2">
    <location>
        <begin position="29"/>
        <end position="57"/>
    </location>
</feature>
<feature type="region of interest" description="Disordered" evidence="2">
    <location>
        <begin position="224"/>
        <end position="278"/>
    </location>
</feature>
<feature type="compositionally biased region" description="Basic residues" evidence="2">
    <location>
        <begin position="258"/>
        <end position="278"/>
    </location>
</feature>
<comment type="function">
    <text evidence="1">One of the primary rRNA binding proteins. Required for association of the 30S and 50S subunits to form the 70S ribosome, for tRNA binding and peptide bond formation. It has been suggested to have peptidyltransferase activity; this is somewhat controversial. Makes several contacts with the 16S rRNA in the 70S ribosome.</text>
</comment>
<comment type="subunit">
    <text evidence="1">Part of the 50S ribosomal subunit. Forms a bridge to the 30S subunit in the 70S ribosome.</text>
</comment>
<comment type="similarity">
    <text evidence="1">Belongs to the universal ribosomal protein uL2 family.</text>
</comment>
<name>RL2_STRGG</name>
<evidence type="ECO:0000255" key="1">
    <source>
        <dbReference type="HAMAP-Rule" id="MF_01320"/>
    </source>
</evidence>
<evidence type="ECO:0000256" key="2">
    <source>
        <dbReference type="SAM" id="MobiDB-lite"/>
    </source>
</evidence>
<evidence type="ECO:0000305" key="3"/>
<accession>B1W404</accession>
<proteinExistence type="inferred from homology"/>
<keyword id="KW-0687">Ribonucleoprotein</keyword>
<keyword id="KW-0689">Ribosomal protein</keyword>
<keyword id="KW-0694">RNA-binding</keyword>
<keyword id="KW-0699">rRNA-binding</keyword>
<organism>
    <name type="scientific">Streptomyces griseus subsp. griseus (strain JCM 4626 / CBS 651.72 / NBRC 13350 / KCC S-0626 / ISP 5235)</name>
    <dbReference type="NCBI Taxonomy" id="455632"/>
    <lineage>
        <taxon>Bacteria</taxon>
        <taxon>Bacillati</taxon>
        <taxon>Actinomycetota</taxon>
        <taxon>Actinomycetes</taxon>
        <taxon>Kitasatosporales</taxon>
        <taxon>Streptomycetaceae</taxon>
        <taxon>Streptomyces</taxon>
    </lineage>
</organism>
<reference key="1">
    <citation type="journal article" date="2008" name="J. Bacteriol.">
        <title>Genome sequence of the streptomycin-producing microorganism Streptomyces griseus IFO 13350.</title>
        <authorList>
            <person name="Ohnishi Y."/>
            <person name="Ishikawa J."/>
            <person name="Hara H."/>
            <person name="Suzuki H."/>
            <person name="Ikenoya M."/>
            <person name="Ikeda H."/>
            <person name="Yamashita A."/>
            <person name="Hattori M."/>
            <person name="Horinouchi S."/>
        </authorList>
    </citation>
    <scope>NUCLEOTIDE SEQUENCE [LARGE SCALE GENOMIC DNA]</scope>
    <source>
        <strain>JCM 4626 / CBS 651.72 / NBRC 13350 / KCC S-0626 / ISP 5235</strain>
    </source>
</reference>
<sequence>MGIRKYKPTTPGRRGSSVADFVEITRSTPEKSLVRPLHSKGGRNNAGRVTVRHQGGGHKRAYRVIDFRRHDKDGVPAKVAHIEYDPNRTARIALLHYADGEKRYIVAPRGLSQGDRVENGPTADIKPGNNLALRNIPVGTTIHAIELRPGGGAKFARSAGASVQLLAKEGTMAHLRMPSGEIRLVDARCRATIGEVGNAEQSNINWGKAGRMRWKGVRPTVRGVAMNPVDHPHGGGEGKTSGGRHPVSPWGQKEGRTRSPKKASNKYIVRRRKTNKKR</sequence>
<dbReference type="EMBL" id="AP009493">
    <property type="protein sequence ID" value="BAG19660.1"/>
    <property type="molecule type" value="Genomic_DNA"/>
</dbReference>
<dbReference type="RefSeq" id="WP_003966957.1">
    <property type="nucleotide sequence ID" value="NC_010572.1"/>
</dbReference>
<dbReference type="SMR" id="B1W404"/>
<dbReference type="GeneID" id="97760373"/>
<dbReference type="KEGG" id="sgr:SGR_2831"/>
<dbReference type="eggNOG" id="COG0090">
    <property type="taxonomic scope" value="Bacteria"/>
</dbReference>
<dbReference type="HOGENOM" id="CLU_036235_2_1_11"/>
<dbReference type="Proteomes" id="UP000001685">
    <property type="component" value="Chromosome"/>
</dbReference>
<dbReference type="GO" id="GO:0015934">
    <property type="term" value="C:large ribosomal subunit"/>
    <property type="evidence" value="ECO:0007669"/>
    <property type="project" value="InterPro"/>
</dbReference>
<dbReference type="GO" id="GO:0019843">
    <property type="term" value="F:rRNA binding"/>
    <property type="evidence" value="ECO:0007669"/>
    <property type="project" value="UniProtKB-UniRule"/>
</dbReference>
<dbReference type="GO" id="GO:0003735">
    <property type="term" value="F:structural constituent of ribosome"/>
    <property type="evidence" value="ECO:0007669"/>
    <property type="project" value="InterPro"/>
</dbReference>
<dbReference type="GO" id="GO:0016740">
    <property type="term" value="F:transferase activity"/>
    <property type="evidence" value="ECO:0007669"/>
    <property type="project" value="InterPro"/>
</dbReference>
<dbReference type="GO" id="GO:0002181">
    <property type="term" value="P:cytoplasmic translation"/>
    <property type="evidence" value="ECO:0007669"/>
    <property type="project" value="TreeGrafter"/>
</dbReference>
<dbReference type="FunFam" id="2.30.30.30:FF:000001">
    <property type="entry name" value="50S ribosomal protein L2"/>
    <property type="match status" value="1"/>
</dbReference>
<dbReference type="FunFam" id="2.40.50.140:FF:000003">
    <property type="entry name" value="50S ribosomal protein L2"/>
    <property type="match status" value="1"/>
</dbReference>
<dbReference type="FunFam" id="4.10.950.10:FF:000001">
    <property type="entry name" value="50S ribosomal protein L2"/>
    <property type="match status" value="1"/>
</dbReference>
<dbReference type="Gene3D" id="2.30.30.30">
    <property type="match status" value="1"/>
</dbReference>
<dbReference type="Gene3D" id="2.40.50.140">
    <property type="entry name" value="Nucleic acid-binding proteins"/>
    <property type="match status" value="1"/>
</dbReference>
<dbReference type="Gene3D" id="4.10.950.10">
    <property type="entry name" value="Ribosomal protein L2, domain 3"/>
    <property type="match status" value="1"/>
</dbReference>
<dbReference type="HAMAP" id="MF_01320_B">
    <property type="entry name" value="Ribosomal_uL2_B"/>
    <property type="match status" value="1"/>
</dbReference>
<dbReference type="InterPro" id="IPR012340">
    <property type="entry name" value="NA-bd_OB-fold"/>
</dbReference>
<dbReference type="InterPro" id="IPR014722">
    <property type="entry name" value="Rib_uL2_dom2"/>
</dbReference>
<dbReference type="InterPro" id="IPR002171">
    <property type="entry name" value="Ribosomal_uL2"/>
</dbReference>
<dbReference type="InterPro" id="IPR005880">
    <property type="entry name" value="Ribosomal_uL2_bac/org-type"/>
</dbReference>
<dbReference type="InterPro" id="IPR022669">
    <property type="entry name" value="Ribosomal_uL2_C"/>
</dbReference>
<dbReference type="InterPro" id="IPR022671">
    <property type="entry name" value="Ribosomal_uL2_CS"/>
</dbReference>
<dbReference type="InterPro" id="IPR014726">
    <property type="entry name" value="Ribosomal_uL2_dom3"/>
</dbReference>
<dbReference type="InterPro" id="IPR022666">
    <property type="entry name" value="Ribosomal_uL2_RNA-bd_dom"/>
</dbReference>
<dbReference type="InterPro" id="IPR008991">
    <property type="entry name" value="Translation_prot_SH3-like_sf"/>
</dbReference>
<dbReference type="NCBIfam" id="TIGR01171">
    <property type="entry name" value="rplB_bact"/>
    <property type="match status" value="1"/>
</dbReference>
<dbReference type="PANTHER" id="PTHR13691:SF5">
    <property type="entry name" value="LARGE RIBOSOMAL SUBUNIT PROTEIN UL2M"/>
    <property type="match status" value="1"/>
</dbReference>
<dbReference type="PANTHER" id="PTHR13691">
    <property type="entry name" value="RIBOSOMAL PROTEIN L2"/>
    <property type="match status" value="1"/>
</dbReference>
<dbReference type="Pfam" id="PF00181">
    <property type="entry name" value="Ribosomal_L2"/>
    <property type="match status" value="1"/>
</dbReference>
<dbReference type="Pfam" id="PF03947">
    <property type="entry name" value="Ribosomal_L2_C"/>
    <property type="match status" value="1"/>
</dbReference>
<dbReference type="PIRSF" id="PIRSF002158">
    <property type="entry name" value="Ribosomal_L2"/>
    <property type="match status" value="1"/>
</dbReference>
<dbReference type="SMART" id="SM01383">
    <property type="entry name" value="Ribosomal_L2"/>
    <property type="match status" value="1"/>
</dbReference>
<dbReference type="SMART" id="SM01382">
    <property type="entry name" value="Ribosomal_L2_C"/>
    <property type="match status" value="1"/>
</dbReference>
<dbReference type="SUPFAM" id="SSF50249">
    <property type="entry name" value="Nucleic acid-binding proteins"/>
    <property type="match status" value="1"/>
</dbReference>
<dbReference type="SUPFAM" id="SSF50104">
    <property type="entry name" value="Translation proteins SH3-like domain"/>
    <property type="match status" value="1"/>
</dbReference>
<dbReference type="PROSITE" id="PS00467">
    <property type="entry name" value="RIBOSOMAL_L2"/>
    <property type="match status" value="1"/>
</dbReference>
<gene>
    <name evidence="1" type="primary">rplB</name>
    <name type="ordered locus">SGR_2831</name>
</gene>